<feature type="chain" id="PRO_0000377951" description="Uncharacterized protein 040R">
    <location>
        <begin position="1"/>
        <end position="83"/>
    </location>
</feature>
<feature type="region of interest" description="Disordered" evidence="1">
    <location>
        <begin position="15"/>
        <end position="36"/>
    </location>
</feature>
<feature type="compositionally biased region" description="Polar residues" evidence="1">
    <location>
        <begin position="21"/>
        <end position="35"/>
    </location>
</feature>
<protein>
    <recommendedName>
        <fullName>Uncharacterized protein 040R</fullName>
    </recommendedName>
</protein>
<keyword id="KW-1185">Reference proteome</keyword>
<evidence type="ECO:0000256" key="1">
    <source>
        <dbReference type="SAM" id="MobiDB-lite"/>
    </source>
</evidence>
<reference key="1">
    <citation type="journal article" date="2006" name="J. Virol.">
        <title>Genome of invertebrate iridescent virus type 3 (mosquito iridescent virus).</title>
        <authorList>
            <person name="Delhon G."/>
            <person name="Tulman E.R."/>
            <person name="Afonso C.L."/>
            <person name="Lu Z."/>
            <person name="Becnel J.J."/>
            <person name="Moser B.A."/>
            <person name="Kutish G.F."/>
            <person name="Rock D.L."/>
        </authorList>
    </citation>
    <scope>NUCLEOTIDE SEQUENCE [LARGE SCALE GENOMIC DNA]</scope>
</reference>
<gene>
    <name type="ORF">IIV3-040R</name>
</gene>
<dbReference type="EMBL" id="DQ643392">
    <property type="protein sequence ID" value="ABF82070.1"/>
    <property type="molecule type" value="Genomic_DNA"/>
</dbReference>
<dbReference type="RefSeq" id="YP_654612.1">
    <property type="nucleotide sequence ID" value="NC_008187.1"/>
</dbReference>
<dbReference type="KEGG" id="vg:4156350"/>
<dbReference type="Proteomes" id="UP000001358">
    <property type="component" value="Genome"/>
</dbReference>
<organismHost>
    <name type="scientific">Aedes vexans</name>
    <name type="common">Inland floodwater mosquito</name>
    <name type="synonym">Culex vexans</name>
    <dbReference type="NCBI Taxonomy" id="7163"/>
</organismHost>
<organismHost>
    <name type="scientific">Culex territans</name>
    <dbReference type="NCBI Taxonomy" id="42431"/>
</organismHost>
<organismHost>
    <name type="scientific">Culiseta annulata</name>
    <dbReference type="NCBI Taxonomy" id="332058"/>
</organismHost>
<organismHost>
    <name type="scientific">Ochlerotatus sollicitans</name>
    <name type="common">eastern saltmarsh mosquito</name>
    <dbReference type="NCBI Taxonomy" id="310513"/>
</organismHost>
<organismHost>
    <name type="scientific">Ochlerotatus taeniorhynchus</name>
    <name type="common">Black salt marsh mosquito</name>
    <name type="synonym">Aedes taeniorhynchus</name>
    <dbReference type="NCBI Taxonomy" id="329105"/>
</organismHost>
<organismHost>
    <name type="scientific">Psorophora ferox</name>
    <dbReference type="NCBI Taxonomy" id="7183"/>
</organismHost>
<accession>Q197C0</accession>
<sequence length="83" mass="9524">MVTMAIKNFHIQDDRLKNGRGNKTMSESDYNTSDSGGWVLVRKKRDRSTRPPDVVDRWSNSTSTFPMGLDQIKIKRNGCVNTY</sequence>
<organism>
    <name type="scientific">Invertebrate iridescent virus 3</name>
    <name type="common">IIV-3</name>
    <name type="synonym">Mosquito iridescent virus</name>
    <dbReference type="NCBI Taxonomy" id="345201"/>
    <lineage>
        <taxon>Viruses</taxon>
        <taxon>Varidnaviria</taxon>
        <taxon>Bamfordvirae</taxon>
        <taxon>Nucleocytoviricota</taxon>
        <taxon>Megaviricetes</taxon>
        <taxon>Pimascovirales</taxon>
        <taxon>Iridoviridae</taxon>
        <taxon>Betairidovirinae</taxon>
        <taxon>Chloriridovirus</taxon>
    </lineage>
</organism>
<name>040R_IIV3</name>
<proteinExistence type="predicted"/>